<keyword id="KW-0687">Ribonucleoprotein</keyword>
<keyword id="KW-0689">Ribosomal protein</keyword>
<keyword id="KW-0694">RNA-binding</keyword>
<keyword id="KW-0699">rRNA-binding</keyword>
<evidence type="ECO:0000255" key="1">
    <source>
        <dbReference type="HAMAP-Rule" id="MF_01310"/>
    </source>
</evidence>
<evidence type="ECO:0000305" key="2"/>
<reference key="1">
    <citation type="journal article" date="2000" name="Nucleic Acids Res.">
        <title>Genome sequences of Chlamydia trachomatis MoPn and Chlamydia pneumoniae AR39.</title>
        <authorList>
            <person name="Read T.D."/>
            <person name="Brunham R.C."/>
            <person name="Shen C."/>
            <person name="Gill S.R."/>
            <person name="Heidelberg J.F."/>
            <person name="White O."/>
            <person name="Hickey E.K."/>
            <person name="Peterson J.D."/>
            <person name="Utterback T.R."/>
            <person name="Berry K.J."/>
            <person name="Bass S."/>
            <person name="Linher K.D."/>
            <person name="Weidman J.F."/>
            <person name="Khouri H.M."/>
            <person name="Craven B."/>
            <person name="Bowman C."/>
            <person name="Dodson R.J."/>
            <person name="Gwinn M.L."/>
            <person name="Nelson W.C."/>
            <person name="DeBoy R.T."/>
            <person name="Kolonay J.F."/>
            <person name="McClarty G."/>
            <person name="Salzberg S.L."/>
            <person name="Eisen J.A."/>
            <person name="Fraser C.M."/>
        </authorList>
    </citation>
    <scope>NUCLEOTIDE SEQUENCE [LARGE SCALE GENOMIC DNA]</scope>
    <source>
        <strain>MoPn / Nigg</strain>
    </source>
</reference>
<accession>Q9PJN3</accession>
<organism>
    <name type="scientific">Chlamydia muridarum (strain MoPn / Nigg)</name>
    <dbReference type="NCBI Taxonomy" id="243161"/>
    <lineage>
        <taxon>Bacteria</taxon>
        <taxon>Pseudomonadati</taxon>
        <taxon>Chlamydiota</taxon>
        <taxon>Chlamydiia</taxon>
        <taxon>Chlamydiales</taxon>
        <taxon>Chlamydiaceae</taxon>
        <taxon>Chlamydia/Chlamydophila group</taxon>
        <taxon>Chlamydia</taxon>
    </lineage>
</organism>
<dbReference type="EMBL" id="AE002160">
    <property type="protein sequence ID" value="AAF39598.1"/>
    <property type="molecule type" value="Genomic_DNA"/>
</dbReference>
<dbReference type="PIR" id="C81663">
    <property type="entry name" value="C81663"/>
</dbReference>
<dbReference type="RefSeq" id="WP_010231573.1">
    <property type="nucleotide sequence ID" value="NZ_CP063055.1"/>
</dbReference>
<dbReference type="SMR" id="Q9PJN3"/>
<dbReference type="GeneID" id="93065347"/>
<dbReference type="KEGG" id="cmu:TC_0795"/>
<dbReference type="eggNOG" id="COG0100">
    <property type="taxonomic scope" value="Bacteria"/>
</dbReference>
<dbReference type="HOGENOM" id="CLU_072439_5_0_0"/>
<dbReference type="OrthoDB" id="9806415at2"/>
<dbReference type="Proteomes" id="UP000000800">
    <property type="component" value="Chromosome"/>
</dbReference>
<dbReference type="GO" id="GO:1990904">
    <property type="term" value="C:ribonucleoprotein complex"/>
    <property type="evidence" value="ECO:0007669"/>
    <property type="project" value="UniProtKB-KW"/>
</dbReference>
<dbReference type="GO" id="GO:0005840">
    <property type="term" value="C:ribosome"/>
    <property type="evidence" value="ECO:0007669"/>
    <property type="project" value="UniProtKB-KW"/>
</dbReference>
<dbReference type="GO" id="GO:0019843">
    <property type="term" value="F:rRNA binding"/>
    <property type="evidence" value="ECO:0007669"/>
    <property type="project" value="UniProtKB-UniRule"/>
</dbReference>
<dbReference type="GO" id="GO:0003735">
    <property type="term" value="F:structural constituent of ribosome"/>
    <property type="evidence" value="ECO:0007669"/>
    <property type="project" value="InterPro"/>
</dbReference>
<dbReference type="GO" id="GO:0006412">
    <property type="term" value="P:translation"/>
    <property type="evidence" value="ECO:0007669"/>
    <property type="project" value="UniProtKB-UniRule"/>
</dbReference>
<dbReference type="FunFam" id="3.30.420.80:FF:000004">
    <property type="entry name" value="30S ribosomal protein S11"/>
    <property type="match status" value="1"/>
</dbReference>
<dbReference type="Gene3D" id="3.30.420.80">
    <property type="entry name" value="Ribosomal protein S11"/>
    <property type="match status" value="1"/>
</dbReference>
<dbReference type="HAMAP" id="MF_01310">
    <property type="entry name" value="Ribosomal_uS11"/>
    <property type="match status" value="1"/>
</dbReference>
<dbReference type="InterPro" id="IPR001971">
    <property type="entry name" value="Ribosomal_uS11"/>
</dbReference>
<dbReference type="InterPro" id="IPR019981">
    <property type="entry name" value="Ribosomal_uS11_bac-type"/>
</dbReference>
<dbReference type="InterPro" id="IPR018102">
    <property type="entry name" value="Ribosomal_uS11_CS"/>
</dbReference>
<dbReference type="InterPro" id="IPR036967">
    <property type="entry name" value="Ribosomal_uS11_sf"/>
</dbReference>
<dbReference type="NCBIfam" id="NF003698">
    <property type="entry name" value="PRK05309.1"/>
    <property type="match status" value="1"/>
</dbReference>
<dbReference type="NCBIfam" id="TIGR03632">
    <property type="entry name" value="uS11_bact"/>
    <property type="match status" value="1"/>
</dbReference>
<dbReference type="PANTHER" id="PTHR11759">
    <property type="entry name" value="40S RIBOSOMAL PROTEIN S14/30S RIBOSOMAL PROTEIN S11"/>
    <property type="match status" value="1"/>
</dbReference>
<dbReference type="Pfam" id="PF00411">
    <property type="entry name" value="Ribosomal_S11"/>
    <property type="match status" value="1"/>
</dbReference>
<dbReference type="PIRSF" id="PIRSF002131">
    <property type="entry name" value="Ribosomal_S11"/>
    <property type="match status" value="1"/>
</dbReference>
<dbReference type="SUPFAM" id="SSF53137">
    <property type="entry name" value="Translational machinery components"/>
    <property type="match status" value="1"/>
</dbReference>
<dbReference type="PROSITE" id="PS00054">
    <property type="entry name" value="RIBOSOMAL_S11"/>
    <property type="match status" value="1"/>
</dbReference>
<gene>
    <name evidence="1" type="primary">rpsK</name>
    <name type="ordered locus">TC_0795</name>
</gene>
<sequence length="132" mass="13884">MVKNQTQKKGVKRKQVKNIPSGVVHVKATFNNTIVTITDPAGNVISWASAGKVGYSGSRKSSAFAATVAAQDAAKTAMSSGLKEVEVSLKGTGAGRESAVRALISSGLIVSVIRDETPVPHNGCRPRKRRRV</sequence>
<name>RS11_CHLMU</name>
<protein>
    <recommendedName>
        <fullName evidence="1">Small ribosomal subunit protein uS11</fullName>
    </recommendedName>
    <alternativeName>
        <fullName evidence="2">30S ribosomal protein S11</fullName>
    </alternativeName>
</protein>
<proteinExistence type="inferred from homology"/>
<feature type="chain" id="PRO_0000123129" description="Small ribosomal subunit protein uS11">
    <location>
        <begin position="1"/>
        <end position="132"/>
    </location>
</feature>
<comment type="function">
    <text evidence="1">Located on the platform of the 30S subunit, it bridges several disparate RNA helices of the 16S rRNA. Forms part of the Shine-Dalgarno cleft in the 70S ribosome.</text>
</comment>
<comment type="subunit">
    <text evidence="1">Part of the 30S ribosomal subunit. Interacts with proteins S7 and S18. Binds to IF-3.</text>
</comment>
<comment type="similarity">
    <text evidence="1">Belongs to the universal ribosomal protein uS11 family.</text>
</comment>